<reference key="1">
    <citation type="journal article" date="1997" name="Biochim. Biophys. Acta">
        <title>Cloning and expression of human cDNA encoding Na+, K(+)-ATPase gamma-subunit.</title>
        <authorList>
            <person name="Kim J.W."/>
            <person name="Lee Y."/>
            <person name="Lee I.A."/>
            <person name="Kang H.B."/>
            <person name="Choe Y.K."/>
            <person name="Choe I.S."/>
        </authorList>
    </citation>
    <scope>NUCLEOTIDE SEQUENCE [MRNA] (ISOFORM 1)</scope>
    <source>
        <tissue>Liver</tissue>
    </source>
</reference>
<reference key="2">
    <citation type="journal article" date="2000" name="Biochem. Biophys. Res. Commun.">
        <title>Genomic organization of the human FXYD2 gene encoding the gamma subunit of the Na,K-ATPase.</title>
        <authorList>
            <person name="Sweadner K.J."/>
            <person name="Wetzel R.K."/>
            <person name="Arystarkhova E."/>
        </authorList>
    </citation>
    <scope>NUCLEOTIDE SEQUENCE (ISOFORMS 1 AND 2)</scope>
</reference>
<reference key="3">
    <citation type="journal article" date="2000" name="Nat. Genet.">
        <title>Dominant isolated renal magnesium loss is caused by misrouting of the Na+,K+-ATPase gamma-subunit.</title>
        <authorList>
            <person name="Meij I.C."/>
            <person name="Koenderink J.B."/>
            <person name="van Bokhoven H."/>
            <person name="Assink K.F.H."/>
            <person name="Groenestege W.T."/>
            <person name="de Pont J.J.H.H.M."/>
            <person name="Bindels R.J.M."/>
            <person name="Monnens L.A.H."/>
            <person name="van den Heuvel L.P.W.J."/>
            <person name="Knoers N.V.A.M."/>
        </authorList>
    </citation>
    <scope>NUCLEOTIDE SEQUENCE [GENOMIC DNA / MRNA] (ISOFORMS 1 AND 2)</scope>
    <scope>VARIANT HOMG2 ARG-41</scope>
</reference>
<reference key="4">
    <citation type="journal article" date="2001" name="Nat. Genet.">
        <authorList>
            <person name="Meij I.C."/>
            <person name="Koenderink J.B."/>
            <person name="van Bokhoven H."/>
            <person name="Assink K.F.H."/>
            <person name="Groenestege W.T."/>
            <person name="de Pont J.J.H.H.M."/>
            <person name="Bindels R.J.M."/>
            <person name="Monnens L.A.H."/>
            <person name="van den Heuvel L.P.W.J."/>
            <person name="Knoers N.V.A.M."/>
        </authorList>
    </citation>
    <scope>ERRATUM OF PUBMED:11062458</scope>
</reference>
<reference key="5">
    <citation type="submission" date="1995-04" db="EMBL/GenBank/DDBJ databases">
        <title>Characterization of the human cDNA with partial homology with the gamma subunit of sodium potassium ATPase of rat, mouse, rabbit and sheep.</title>
        <authorList>
            <person name="Austruy E."/>
            <person name="Belley L."/>
            <person name="Millasot P."/>
            <person name="Junien C."/>
            <person name="Jeanpierre C."/>
        </authorList>
    </citation>
    <scope>NUCLEOTIDE SEQUENCE [MRNA]</scope>
    <source>
        <tissue>Kidney</tissue>
    </source>
</reference>
<reference key="6">
    <citation type="submission" date="2003-05" db="EMBL/GenBank/DDBJ databases">
        <title>Cloning of human full-length CDSs in BD Creator(TM) system donor vector.</title>
        <authorList>
            <person name="Kalnine N."/>
            <person name="Chen X."/>
            <person name="Rolfs A."/>
            <person name="Halleck A."/>
            <person name="Hines L."/>
            <person name="Eisenstein S."/>
            <person name="Koundinya M."/>
            <person name="Raphael J."/>
            <person name="Moreira D."/>
            <person name="Kelley T."/>
            <person name="LaBaer J."/>
            <person name="Lin Y."/>
            <person name="Phelan M."/>
            <person name="Farmer A."/>
        </authorList>
    </citation>
    <scope>NUCLEOTIDE SEQUENCE [LARGE SCALE MRNA] (ISOFORM 2)</scope>
</reference>
<reference key="7">
    <citation type="journal article" date="2004" name="Genome Res.">
        <title>The status, quality, and expansion of the NIH full-length cDNA project: the Mammalian Gene Collection (MGC).</title>
        <authorList>
            <consortium name="The MGC Project Team"/>
        </authorList>
    </citation>
    <scope>NUCLEOTIDE SEQUENCE [LARGE SCALE MRNA] (ISOFORMS 1 AND 2)</scope>
    <source>
        <tissue>Bone marrow</tissue>
        <tissue>Kidney</tissue>
    </source>
</reference>
<name>ATNG_HUMAN</name>
<keyword id="KW-0002">3D-structure</keyword>
<keyword id="KW-0025">Alternative splicing</keyword>
<keyword id="KW-0225">Disease variant</keyword>
<keyword id="KW-0406">Ion transport</keyword>
<keyword id="KW-0472">Membrane</keyword>
<keyword id="KW-0630">Potassium</keyword>
<keyword id="KW-0633">Potassium transport</keyword>
<keyword id="KW-0982">Primary hypomagnesemia</keyword>
<keyword id="KW-1267">Proteomics identification</keyword>
<keyword id="KW-1185">Reference proteome</keyword>
<keyword id="KW-0915">Sodium</keyword>
<keyword id="KW-0739">Sodium transport</keyword>
<keyword id="KW-0740">Sodium/potassium transport</keyword>
<keyword id="KW-0812">Transmembrane</keyword>
<keyword id="KW-1133">Transmembrane helix</keyword>
<keyword id="KW-0813">Transport</keyword>
<comment type="function">
    <text>May be involved in forming the receptor site for cardiac glycoside binding or may modulate the transport function of the sodium ATPase.</text>
</comment>
<comment type="subunit">
    <text evidence="1">Regulatory subunit of the sodium/potassium-transporting ATPase which is composed of a catalytic alpha subunit, an auxiliary non-catalytic beta subunit and an additional regulatory subunit.</text>
</comment>
<comment type="interaction">
    <interactant intactId="EBI-13084584">
        <id>P54710-2</id>
    </interactant>
    <interactant intactId="EBI-781551">
        <id>Q9Y282</id>
        <label>ERGIC3</label>
    </interactant>
    <organismsDiffer>false</organismsDiffer>
    <experiments>3</experiments>
</comment>
<comment type="interaction">
    <interactant intactId="EBI-13084584">
        <id>P54710-2</id>
    </interactant>
    <interactant intactId="EBI-347996">
        <id>O43765</id>
        <label>SGTA</label>
    </interactant>
    <organismsDiffer>false</organismsDiffer>
    <experiments>5</experiments>
</comment>
<comment type="subcellular location">
    <subcellularLocation>
        <location evidence="7">Membrane</location>
        <topology evidence="7">Single-pass type III membrane protein</topology>
    </subcellularLocation>
</comment>
<comment type="alternative products">
    <event type="alternative splicing"/>
    <isoform>
        <id>P54710-1</id>
        <name>1</name>
        <name>A</name>
        <sequence type="displayed"/>
    </isoform>
    <isoform>
        <id>P54710-2</id>
        <name>2</name>
        <name>B</name>
        <sequence type="described" ref="VSP_001580"/>
    </isoform>
</comment>
<comment type="tissue specificity">
    <text>Expressed in the distal convoluted tubule in the kidney. Found on basolateral membranes of nephron epithelial cells.</text>
</comment>
<comment type="disease" evidence="3">
    <disease id="DI-00577">
        <name>Hypomagnesemia 2</name>
        <acronym>HOMG2</acronym>
        <description>A disorder due to primary renal wasting of magnesium. Plasma levels of other electrolytes are normal. The only abnormality found, in addition to low magnesium levels, is lowered renal excretion of calcium resulting in hypocalciuria.</description>
        <dbReference type="MIM" id="154020"/>
    </disease>
    <text>The disease is caused by variants affecting the gene represented in this entry.</text>
</comment>
<comment type="similarity">
    <text evidence="7">Belongs to the FXYD family.</text>
</comment>
<comment type="sequence caution" evidence="7">
    <conflict type="frameshift">
        <sequence resource="EMBL-CDS" id="AAB09425"/>
    </conflict>
</comment>
<comment type="sequence caution" evidence="7">
    <conflict type="erroneous translation">
        <sequence resource="EMBL-CDS" id="CAA60152"/>
    </conflict>
    <text>Wrong choice of frame.</text>
</comment>
<dbReference type="EMBL" id="U50743">
    <property type="protein sequence ID" value="AAB09425.1"/>
    <property type="status" value="ALT_FRAME"/>
    <property type="molecule type" value="mRNA"/>
</dbReference>
<dbReference type="EMBL" id="AF316896">
    <property type="protein sequence ID" value="AAG37906.1"/>
    <property type="molecule type" value="Genomic_DNA"/>
</dbReference>
<dbReference type="EMBL" id="AF316896">
    <property type="protein sequence ID" value="AAG37907.1"/>
    <property type="molecule type" value="Genomic_DNA"/>
</dbReference>
<dbReference type="EMBL" id="AF241235">
    <property type="protein sequence ID" value="AAG34359.1"/>
    <property type="molecule type" value="Genomic_DNA"/>
</dbReference>
<dbReference type="EMBL" id="AF241235">
    <property type="protein sequence ID" value="AAG34360.1"/>
    <property type="molecule type" value="Genomic_DNA"/>
</dbReference>
<dbReference type="EMBL" id="AF241236">
    <property type="protein sequence ID" value="AAG34361.1"/>
    <property type="molecule type" value="mRNA"/>
</dbReference>
<dbReference type="EMBL" id="X86400">
    <property type="protein sequence ID" value="CAA60152.1"/>
    <property type="status" value="ALT_SEQ"/>
    <property type="molecule type" value="mRNA"/>
</dbReference>
<dbReference type="EMBL" id="BT006721">
    <property type="protein sequence ID" value="AAP35367.1"/>
    <property type="molecule type" value="mRNA"/>
</dbReference>
<dbReference type="EMBL" id="BC013289">
    <property type="protein sequence ID" value="AAH13289.1"/>
    <property type="molecule type" value="mRNA"/>
</dbReference>
<dbReference type="EMBL" id="BC005302">
    <property type="protein sequence ID" value="AAH05302.1"/>
    <property type="molecule type" value="mRNA"/>
</dbReference>
<dbReference type="CCDS" id="CCDS8385.1">
    <molecule id="P54710-2"/>
</dbReference>
<dbReference type="CCDS" id="CCDS8386.1">
    <molecule id="P54710-1"/>
</dbReference>
<dbReference type="PIR" id="S54159">
    <property type="entry name" value="S54159"/>
</dbReference>
<dbReference type="RefSeq" id="NP_001671.2">
    <molecule id="P54710-1"/>
    <property type="nucleotide sequence ID" value="NM_001680.4"/>
</dbReference>
<dbReference type="RefSeq" id="NP_067614.1">
    <molecule id="P54710-2"/>
    <property type="nucleotide sequence ID" value="NM_021603.4"/>
</dbReference>
<dbReference type="PDB" id="2MKV">
    <property type="method" value="NMR"/>
    <property type="chains" value="A=9-66"/>
</dbReference>
<dbReference type="PDB" id="7E1Z">
    <property type="method" value="EM"/>
    <property type="resolution" value="3.20 A"/>
    <property type="chains" value="C=1-66"/>
</dbReference>
<dbReference type="PDB" id="7E20">
    <property type="method" value="EM"/>
    <property type="resolution" value="2.70 A"/>
    <property type="chains" value="C=1-66"/>
</dbReference>
<dbReference type="PDB" id="7E21">
    <property type="method" value="EM"/>
    <property type="resolution" value="2.90 A"/>
    <property type="chains" value="C=1-66"/>
</dbReference>
<dbReference type="PDBsum" id="2MKV"/>
<dbReference type="PDBsum" id="7E1Z"/>
<dbReference type="PDBsum" id="7E20"/>
<dbReference type="PDBsum" id="7E21"/>
<dbReference type="BMRB" id="P54710"/>
<dbReference type="EMDB" id="EMD-30947"/>
<dbReference type="EMDB" id="EMD-30948"/>
<dbReference type="EMDB" id="EMD-30949"/>
<dbReference type="SMR" id="P54710"/>
<dbReference type="BioGRID" id="106976">
    <property type="interactions" value="9"/>
</dbReference>
<dbReference type="ComplexPortal" id="CPX-125">
    <property type="entry name" value="Sodium:potassium-exchanging ATPase complex, FXYD2 variant"/>
</dbReference>
<dbReference type="FunCoup" id="P54710">
    <property type="interactions" value="644"/>
</dbReference>
<dbReference type="IntAct" id="P54710">
    <property type="interactions" value="6"/>
</dbReference>
<dbReference type="STRING" id="9606.ENSP00000292079"/>
<dbReference type="ChEMBL" id="CHEMBL2095186"/>
<dbReference type="DrugBank" id="DB09020">
    <property type="generic name" value="Bisacodyl"/>
</dbReference>
<dbReference type="DrugBank" id="DB00606">
    <property type="generic name" value="Cyclothiazide"/>
</dbReference>
<dbReference type="DrugBank" id="DB01250">
    <property type="generic name" value="Olsalazine"/>
</dbReference>
<dbReference type="DrugBank" id="DB13620">
    <property type="generic name" value="Potassium gluconate"/>
</dbReference>
<dbReference type="DrugBank" id="DB09479">
    <property type="generic name" value="Rubidium Rb-82"/>
</dbReference>
<dbReference type="DrugBank" id="DB16690">
    <property type="generic name" value="Tegoprazan"/>
</dbReference>
<dbReference type="DrugBank" id="DB11590">
    <property type="generic name" value="Thimerosal"/>
</dbReference>
<dbReference type="DrugCentral" id="P54710"/>
<dbReference type="TCDB" id="1.A.27.2.1">
    <property type="family name" value="the phospholemman (plm) family"/>
</dbReference>
<dbReference type="GlyGen" id="P54710">
    <property type="glycosylation" value="1 site, 1 O-linked glycan (1 site)"/>
</dbReference>
<dbReference type="iPTMnet" id="P54710"/>
<dbReference type="BioMuta" id="FXYD2"/>
<dbReference type="DMDM" id="20141251"/>
<dbReference type="jPOST" id="P54710"/>
<dbReference type="MassIVE" id="P54710"/>
<dbReference type="PaxDb" id="9606-ENSP00000292079"/>
<dbReference type="PeptideAtlas" id="P54710"/>
<dbReference type="ProteomicsDB" id="56698">
    <molecule id="P54710-1"/>
</dbReference>
<dbReference type="ProteomicsDB" id="56699">
    <molecule id="P54710-2"/>
</dbReference>
<dbReference type="Antibodypedia" id="32392">
    <property type="antibodies" value="100 antibodies from 25 providers"/>
</dbReference>
<dbReference type="DNASU" id="486"/>
<dbReference type="Ensembl" id="ENST00000260287.2">
    <molecule id="P54710-2"/>
    <property type="protein sequence ID" value="ENSP00000260287.2"/>
    <property type="gene ID" value="ENSG00000137731.14"/>
</dbReference>
<dbReference type="Ensembl" id="ENST00000292079.7">
    <molecule id="P54710-1"/>
    <property type="protein sequence ID" value="ENSP00000292079.2"/>
    <property type="gene ID" value="ENSG00000137731.14"/>
</dbReference>
<dbReference type="Ensembl" id="ENST00000528014.5">
    <molecule id="P54710-2"/>
    <property type="protein sequence ID" value="ENSP00000432430.1"/>
    <property type="gene ID" value="ENSG00000137731.14"/>
</dbReference>
<dbReference type="Ensembl" id="ENST00000532119.5">
    <molecule id="P54710-2"/>
    <property type="protein sequence ID" value="ENSP00000436414.1"/>
    <property type="gene ID" value="ENSG00000137731.14"/>
</dbReference>
<dbReference type="GeneID" id="486"/>
<dbReference type="KEGG" id="hsa:486"/>
<dbReference type="MANE-Select" id="ENST00000292079.7">
    <property type="protein sequence ID" value="ENSP00000292079.2"/>
    <property type="RefSeq nucleotide sequence ID" value="NM_001680.5"/>
    <property type="RefSeq protein sequence ID" value="NP_001671.2"/>
</dbReference>
<dbReference type="UCSC" id="uc001prj.2">
    <molecule id="P54710-1"/>
    <property type="organism name" value="human"/>
</dbReference>
<dbReference type="AGR" id="HGNC:4026"/>
<dbReference type="CTD" id="486"/>
<dbReference type="DisGeNET" id="486"/>
<dbReference type="GeneCards" id="FXYD2"/>
<dbReference type="HGNC" id="HGNC:4026">
    <property type="gene designation" value="FXYD2"/>
</dbReference>
<dbReference type="HPA" id="ENSG00000137731">
    <property type="expression patterns" value="Tissue enriched (kidney)"/>
</dbReference>
<dbReference type="MalaCards" id="FXYD2"/>
<dbReference type="MIM" id="154020">
    <property type="type" value="phenotype"/>
</dbReference>
<dbReference type="MIM" id="601814">
    <property type="type" value="gene"/>
</dbReference>
<dbReference type="neXtProt" id="NX_P54710"/>
<dbReference type="OpenTargets" id="ENSG00000137731"/>
<dbReference type="Orphanet" id="34528">
    <property type="disease" value="Autosomal dominant primary hypomagnesemia with hypocalciuria"/>
</dbReference>
<dbReference type="PharmGKB" id="PA28442"/>
<dbReference type="VEuPathDB" id="HostDB:ENSG00000137731"/>
<dbReference type="eggNOG" id="ENOG502SGMI">
    <property type="taxonomic scope" value="Eukaryota"/>
</dbReference>
<dbReference type="GeneTree" id="ENSGT00940000153062"/>
<dbReference type="HOGENOM" id="CLU_171208_4_0_1"/>
<dbReference type="InParanoid" id="P54710"/>
<dbReference type="OMA" id="FRCGGSK"/>
<dbReference type="OrthoDB" id="8430468at2759"/>
<dbReference type="PAN-GO" id="P54710">
    <property type="GO annotations" value="2 GO annotations based on evolutionary models"/>
</dbReference>
<dbReference type="PhylomeDB" id="P54710"/>
<dbReference type="TreeFam" id="TF333443"/>
<dbReference type="PathwayCommons" id="P54710"/>
<dbReference type="Reactome" id="R-HSA-5578775">
    <property type="pathway name" value="Ion homeostasis"/>
</dbReference>
<dbReference type="Reactome" id="R-HSA-936837">
    <property type="pathway name" value="Ion transport by P-type ATPases"/>
</dbReference>
<dbReference type="Reactome" id="R-HSA-9679191">
    <property type="pathway name" value="Potential therapeutics for SARS"/>
</dbReference>
<dbReference type="SignaLink" id="P54710"/>
<dbReference type="SIGNOR" id="P54710"/>
<dbReference type="BioGRID-ORCS" id="486">
    <property type="hits" value="7 hits in 1140 CRISPR screens"/>
</dbReference>
<dbReference type="EvolutionaryTrace" id="P54710"/>
<dbReference type="GeneWiki" id="FXYD2"/>
<dbReference type="GenomeRNAi" id="486"/>
<dbReference type="Pharos" id="P54710">
    <property type="development level" value="Tclin"/>
</dbReference>
<dbReference type="PRO" id="PR:P54710"/>
<dbReference type="Proteomes" id="UP000005640">
    <property type="component" value="Chromosome 11"/>
</dbReference>
<dbReference type="RNAct" id="P54710">
    <property type="molecule type" value="protein"/>
</dbReference>
<dbReference type="Bgee" id="ENSG00000137731">
    <property type="expression patterns" value="Expressed in metanephros cortex and 100 other cell types or tissues"/>
</dbReference>
<dbReference type="GO" id="GO:0016323">
    <property type="term" value="C:basolateral plasma membrane"/>
    <property type="evidence" value="ECO:0007669"/>
    <property type="project" value="Ensembl"/>
</dbReference>
<dbReference type="GO" id="GO:0070062">
    <property type="term" value="C:extracellular exosome"/>
    <property type="evidence" value="ECO:0007005"/>
    <property type="project" value="UniProtKB"/>
</dbReference>
<dbReference type="GO" id="GO:0005886">
    <property type="term" value="C:plasma membrane"/>
    <property type="evidence" value="ECO:0000304"/>
    <property type="project" value="Reactome"/>
</dbReference>
<dbReference type="GO" id="GO:0005890">
    <property type="term" value="C:sodium:potassium-exchanging ATPase complex"/>
    <property type="evidence" value="ECO:0000353"/>
    <property type="project" value="ComplexPortal"/>
</dbReference>
<dbReference type="GO" id="GO:0001671">
    <property type="term" value="F:ATPase activator activity"/>
    <property type="evidence" value="ECO:0000250"/>
    <property type="project" value="ARUK-UCL"/>
</dbReference>
<dbReference type="GO" id="GO:0030674">
    <property type="term" value="F:protein-macromolecule adaptor activity"/>
    <property type="evidence" value="ECO:0000250"/>
    <property type="project" value="ARUK-UCL"/>
</dbReference>
<dbReference type="GO" id="GO:0017080">
    <property type="term" value="F:sodium channel regulator activity"/>
    <property type="evidence" value="ECO:0000318"/>
    <property type="project" value="GO_Central"/>
</dbReference>
<dbReference type="GO" id="GO:0071475">
    <property type="term" value="P:cellular hyperosmotic salinity response"/>
    <property type="evidence" value="ECO:0007669"/>
    <property type="project" value="Ensembl"/>
</dbReference>
<dbReference type="GO" id="GO:0010248">
    <property type="term" value="P:establishment or maintenance of transmembrane electrochemical gradient"/>
    <property type="evidence" value="ECO:0000303"/>
    <property type="project" value="ComplexPortal"/>
</dbReference>
<dbReference type="GO" id="GO:0030007">
    <property type="term" value="P:intracellular potassium ion homeostasis"/>
    <property type="evidence" value="ECO:0000266"/>
    <property type="project" value="ComplexPortal"/>
</dbReference>
<dbReference type="GO" id="GO:0006883">
    <property type="term" value="P:intracellular sodium ion homeostasis"/>
    <property type="evidence" value="ECO:0000266"/>
    <property type="project" value="ComplexPortal"/>
</dbReference>
<dbReference type="GO" id="GO:0008285">
    <property type="term" value="P:negative regulation of cell population proliferation"/>
    <property type="evidence" value="ECO:0007669"/>
    <property type="project" value="Ensembl"/>
</dbReference>
<dbReference type="GO" id="GO:1903278">
    <property type="term" value="P:positive regulation of sodium ion export across plasma membrane"/>
    <property type="evidence" value="ECO:0000318"/>
    <property type="project" value="GO_Central"/>
</dbReference>
<dbReference type="GO" id="GO:1990573">
    <property type="term" value="P:potassium ion import across plasma membrane"/>
    <property type="evidence" value="ECO:0000250"/>
    <property type="project" value="BHF-UCL"/>
</dbReference>
<dbReference type="GO" id="GO:1902600">
    <property type="term" value="P:proton transmembrane transport"/>
    <property type="evidence" value="ECO:0000303"/>
    <property type="project" value="ComplexPortal"/>
</dbReference>
<dbReference type="GO" id="GO:0036376">
    <property type="term" value="P:sodium ion export across plasma membrane"/>
    <property type="evidence" value="ECO:0000250"/>
    <property type="project" value="BHF-UCL"/>
</dbReference>
<dbReference type="GO" id="GO:0055085">
    <property type="term" value="P:transmembrane transport"/>
    <property type="evidence" value="ECO:0000250"/>
    <property type="project" value="BHF-UCL"/>
</dbReference>
<dbReference type="CDD" id="cd20318">
    <property type="entry name" value="FXYD2"/>
    <property type="match status" value="1"/>
</dbReference>
<dbReference type="FunFam" id="1.20.5.780:FF:000004">
    <property type="entry name" value="FXYD domain-containing ion transport regulator"/>
    <property type="match status" value="1"/>
</dbReference>
<dbReference type="Gene3D" id="1.20.5.780">
    <property type="entry name" value="Single helix bin"/>
    <property type="match status" value="1"/>
</dbReference>
<dbReference type="InterPro" id="IPR047282">
    <property type="entry name" value="ATNG"/>
</dbReference>
<dbReference type="InterPro" id="IPR047297">
    <property type="entry name" value="FXYD_motif"/>
</dbReference>
<dbReference type="InterPro" id="IPR000272">
    <property type="entry name" value="Ion-transport_regulator_FXYD"/>
</dbReference>
<dbReference type="PANTHER" id="PTHR14132">
    <property type="entry name" value="SODIUM/POTASSIUM-TRANSPORTING ATPASE SUBUNIT GAMMA"/>
    <property type="match status" value="1"/>
</dbReference>
<dbReference type="PANTHER" id="PTHR14132:SF3">
    <property type="entry name" value="SODIUM_POTASSIUM-TRANSPORTING ATPASE SUBUNIT GAMMA"/>
    <property type="match status" value="1"/>
</dbReference>
<dbReference type="Pfam" id="PF02038">
    <property type="entry name" value="ATP1G1_PLM_MAT8"/>
    <property type="match status" value="1"/>
</dbReference>
<dbReference type="PROSITE" id="PS01310">
    <property type="entry name" value="FXYD"/>
    <property type="match status" value="1"/>
</dbReference>
<feature type="chain" id="PRO_0000148185" description="Sodium/potassium-transporting ATPase subunit gamma">
    <location>
        <begin position="1"/>
        <end position="66"/>
    </location>
</feature>
<feature type="transmembrane region" description="Helical" evidence="2">
    <location>
        <begin position="29"/>
        <end position="46"/>
    </location>
</feature>
<feature type="splice variant" id="VSP_001580" description="In isoform 2." evidence="4 5 6">
    <original>MTGLSMDG</original>
    <variation>MDRWYL</variation>
    <location>
        <begin position="1"/>
        <end position="8"/>
    </location>
</feature>
<feature type="sequence variant" id="VAR_013280" description="In HOMG2; fails to localize to plasma membrane; dbSNP:rs28938168." evidence="3">
    <original>G</original>
    <variation>R</variation>
    <location>
        <position position="41"/>
    </location>
</feature>
<feature type="helix" evidence="9">
    <location>
        <begin position="23"/>
        <end position="45"/>
    </location>
</feature>
<feature type="strand" evidence="8">
    <location>
        <begin position="52"/>
        <end position="55"/>
    </location>
</feature>
<gene>
    <name type="primary">FXYD2</name>
    <name type="synonym">ATP1C</name>
    <name type="synonym">ATP1G1</name>
</gene>
<evidence type="ECO:0000250" key="1">
    <source>
        <dbReference type="UniProtKB" id="O13001"/>
    </source>
</evidence>
<evidence type="ECO:0000255" key="2"/>
<evidence type="ECO:0000269" key="3">
    <source>
    </source>
</evidence>
<evidence type="ECO:0000303" key="4">
    <source>
    </source>
</evidence>
<evidence type="ECO:0000303" key="5">
    <source>
    </source>
</evidence>
<evidence type="ECO:0000303" key="6">
    <source ref="6"/>
</evidence>
<evidence type="ECO:0000305" key="7"/>
<evidence type="ECO:0007829" key="8">
    <source>
        <dbReference type="PDB" id="2MKV"/>
    </source>
</evidence>
<evidence type="ECO:0007829" key="9">
    <source>
        <dbReference type="PDB" id="7E20"/>
    </source>
</evidence>
<sequence length="66" mass="7283">MTGLSMDGGGSPKGDVDPFYYDYETVRNGGLIFAGLAFIVGLLILLSRRFRCGGNKKRRQINEDEP</sequence>
<protein>
    <recommendedName>
        <fullName>Sodium/potassium-transporting ATPase subunit gamma</fullName>
        <shortName>Na(+)/K(+) ATPase subunit gamma</shortName>
    </recommendedName>
    <alternativeName>
        <fullName>FXYD domain-containing ion transport regulator 2</fullName>
    </alternativeName>
    <alternativeName>
        <fullName>Sodium pump gamma chain</fullName>
    </alternativeName>
</protein>
<organism>
    <name type="scientific">Homo sapiens</name>
    <name type="common">Human</name>
    <dbReference type="NCBI Taxonomy" id="9606"/>
    <lineage>
        <taxon>Eukaryota</taxon>
        <taxon>Metazoa</taxon>
        <taxon>Chordata</taxon>
        <taxon>Craniata</taxon>
        <taxon>Vertebrata</taxon>
        <taxon>Euteleostomi</taxon>
        <taxon>Mammalia</taxon>
        <taxon>Eutheria</taxon>
        <taxon>Euarchontoglires</taxon>
        <taxon>Primates</taxon>
        <taxon>Haplorrhini</taxon>
        <taxon>Catarrhini</taxon>
        <taxon>Hominidae</taxon>
        <taxon>Homo</taxon>
    </lineage>
</organism>
<accession>P54710</accession>
<accession>Q15332</accession>
<accession>Q53YC1</accession>
<accession>Q9GZP3</accession>
<accession>Q9GZQ7</accession>
<proteinExistence type="evidence at protein level"/>